<dbReference type="EC" id="3.6.5.-" evidence="1"/>
<dbReference type="EMBL" id="U08227">
    <property type="protein sequence ID" value="AAA21380.1"/>
    <property type="molecule type" value="mRNA"/>
</dbReference>
<dbReference type="EMBL" id="BC088857">
    <property type="protein sequence ID" value="AAH88857.1"/>
    <property type="molecule type" value="mRNA"/>
</dbReference>
<dbReference type="PIR" id="I55401">
    <property type="entry name" value="I55401"/>
</dbReference>
<dbReference type="RefSeq" id="NP_037348.1">
    <property type="nucleotide sequence ID" value="NM_013216.1"/>
</dbReference>
<dbReference type="PDB" id="2L0X">
    <property type="method" value="NMR"/>
    <property type="chains" value="A=6-174"/>
</dbReference>
<dbReference type="PDBsum" id="2L0X"/>
<dbReference type="BMRB" id="Q62639"/>
<dbReference type="SMR" id="Q62639"/>
<dbReference type="BioGRID" id="247802">
    <property type="interactions" value="2"/>
</dbReference>
<dbReference type="FunCoup" id="Q62639">
    <property type="interactions" value="3360"/>
</dbReference>
<dbReference type="STRING" id="10116.ENSRNOP00000063915"/>
<dbReference type="iPTMnet" id="Q62639"/>
<dbReference type="PhosphoSitePlus" id="Q62639"/>
<dbReference type="jPOST" id="Q62639"/>
<dbReference type="PaxDb" id="10116-ENSRNOP00000063915"/>
<dbReference type="DNASU" id="26954"/>
<dbReference type="Ensembl" id="ENSRNOT00000071737.3">
    <property type="protein sequence ID" value="ENSRNOP00000063915.3"/>
    <property type="gene ID" value="ENSRNOG00000050578.3"/>
</dbReference>
<dbReference type="GeneID" id="26954"/>
<dbReference type="KEGG" id="rno:26954"/>
<dbReference type="AGR" id="RGD:621840"/>
<dbReference type="CTD" id="6009"/>
<dbReference type="RGD" id="621840">
    <property type="gene designation" value="Rheb"/>
</dbReference>
<dbReference type="eggNOG" id="KOG0395">
    <property type="taxonomic scope" value="Eukaryota"/>
</dbReference>
<dbReference type="GeneTree" id="ENSGT00940000159945"/>
<dbReference type="InParanoid" id="Q62639"/>
<dbReference type="OrthoDB" id="18500at9989"/>
<dbReference type="PhylomeDB" id="Q62639"/>
<dbReference type="Reactome" id="R-RNO-1632852">
    <property type="pathway name" value="Macroautophagy"/>
</dbReference>
<dbReference type="Reactome" id="R-RNO-165159">
    <property type="pathway name" value="MTOR signalling"/>
</dbReference>
<dbReference type="Reactome" id="R-RNO-166208">
    <property type="pathway name" value="mTORC1-mediated signalling"/>
</dbReference>
<dbReference type="Reactome" id="R-RNO-380972">
    <property type="pathway name" value="Energy dependent regulation of mTOR by LKB1-AMPK"/>
</dbReference>
<dbReference type="Reactome" id="R-RNO-5628897">
    <property type="pathway name" value="TP53 Regulates Metabolic Genes"/>
</dbReference>
<dbReference type="Reactome" id="R-RNO-8943724">
    <property type="pathway name" value="Regulation of PTEN gene transcription"/>
</dbReference>
<dbReference type="Reactome" id="R-RNO-9639288">
    <property type="pathway name" value="Amino acids regulate mTORC1"/>
</dbReference>
<dbReference type="EvolutionaryTrace" id="Q62639"/>
<dbReference type="PRO" id="PR:Q62639"/>
<dbReference type="Proteomes" id="UP000002494">
    <property type="component" value="Chromosome 4"/>
</dbReference>
<dbReference type="GO" id="GO:0005829">
    <property type="term" value="C:cytosol"/>
    <property type="evidence" value="ECO:0007669"/>
    <property type="project" value="UniProtKB-SubCell"/>
</dbReference>
<dbReference type="GO" id="GO:0030425">
    <property type="term" value="C:dendrite"/>
    <property type="evidence" value="ECO:0000314"/>
    <property type="project" value="RGD"/>
</dbReference>
<dbReference type="GO" id="GO:0012505">
    <property type="term" value="C:endomembrane system"/>
    <property type="evidence" value="ECO:0000250"/>
    <property type="project" value="UniProtKB"/>
</dbReference>
<dbReference type="GO" id="GO:0005789">
    <property type="term" value="C:endoplasmic reticulum membrane"/>
    <property type="evidence" value="ECO:0007669"/>
    <property type="project" value="UniProtKB-SubCell"/>
</dbReference>
<dbReference type="GO" id="GO:0098978">
    <property type="term" value="C:glutamatergic synapse"/>
    <property type="evidence" value="ECO:0000314"/>
    <property type="project" value="SynGO"/>
</dbReference>
<dbReference type="GO" id="GO:0000139">
    <property type="term" value="C:Golgi membrane"/>
    <property type="evidence" value="ECO:0000266"/>
    <property type="project" value="RGD"/>
</dbReference>
<dbReference type="GO" id="GO:0005765">
    <property type="term" value="C:lysosomal membrane"/>
    <property type="evidence" value="ECO:0000250"/>
    <property type="project" value="UniProtKB"/>
</dbReference>
<dbReference type="GO" id="GO:0043025">
    <property type="term" value="C:neuronal cell body"/>
    <property type="evidence" value="ECO:0000314"/>
    <property type="project" value="RGD"/>
</dbReference>
<dbReference type="GO" id="GO:0005886">
    <property type="term" value="C:plasma membrane"/>
    <property type="evidence" value="ECO:0000318"/>
    <property type="project" value="GO_Central"/>
</dbReference>
<dbReference type="GO" id="GO:0014069">
    <property type="term" value="C:postsynaptic density"/>
    <property type="evidence" value="ECO:0000266"/>
    <property type="project" value="RGD"/>
</dbReference>
<dbReference type="GO" id="GO:0005681">
    <property type="term" value="C:spliceosomal complex"/>
    <property type="evidence" value="ECO:0000266"/>
    <property type="project" value="RGD"/>
</dbReference>
<dbReference type="GO" id="GO:0045202">
    <property type="term" value="C:synapse"/>
    <property type="evidence" value="ECO:0000266"/>
    <property type="project" value="RGD"/>
</dbReference>
<dbReference type="GO" id="GO:0019003">
    <property type="term" value="F:GDP binding"/>
    <property type="evidence" value="ECO:0000314"/>
    <property type="project" value="RGD"/>
</dbReference>
<dbReference type="GO" id="GO:0005525">
    <property type="term" value="F:GTP binding"/>
    <property type="evidence" value="ECO:0000314"/>
    <property type="project" value="RGD"/>
</dbReference>
<dbReference type="GO" id="GO:0003924">
    <property type="term" value="F:GTPase activity"/>
    <property type="evidence" value="ECO:0000314"/>
    <property type="project" value="RGD"/>
</dbReference>
<dbReference type="GO" id="GO:0000287">
    <property type="term" value="F:magnesium ion binding"/>
    <property type="evidence" value="ECO:0000266"/>
    <property type="project" value="RGD"/>
</dbReference>
<dbReference type="GO" id="GO:0030295">
    <property type="term" value="F:protein kinase activator activity"/>
    <property type="evidence" value="ECO:0000250"/>
    <property type="project" value="UniProtKB"/>
</dbReference>
<dbReference type="GO" id="GO:0019901">
    <property type="term" value="F:protein kinase binding"/>
    <property type="evidence" value="ECO:0000266"/>
    <property type="project" value="RGD"/>
</dbReference>
<dbReference type="GO" id="GO:0043539">
    <property type="term" value="F:protein serine/threonine kinase activator activity"/>
    <property type="evidence" value="ECO:0000266"/>
    <property type="project" value="RGD"/>
</dbReference>
<dbReference type="GO" id="GO:0031669">
    <property type="term" value="P:cellular response to nutrient levels"/>
    <property type="evidence" value="ECO:0000266"/>
    <property type="project" value="RGD"/>
</dbReference>
<dbReference type="GO" id="GO:0120163">
    <property type="term" value="P:negative regulation of cold-induced thermogenesis"/>
    <property type="evidence" value="ECO:0000250"/>
    <property type="project" value="YuBioLab"/>
</dbReference>
<dbReference type="GO" id="GO:0048709">
    <property type="term" value="P:oligodendrocyte differentiation"/>
    <property type="evidence" value="ECO:0000266"/>
    <property type="project" value="RGD"/>
</dbReference>
<dbReference type="GO" id="GO:0048714">
    <property type="term" value="P:positive regulation of oligodendrocyte differentiation"/>
    <property type="evidence" value="ECO:0000266"/>
    <property type="project" value="RGD"/>
</dbReference>
<dbReference type="GO" id="GO:0032008">
    <property type="term" value="P:positive regulation of TOR signaling"/>
    <property type="evidence" value="ECO:0000250"/>
    <property type="project" value="UniProtKB"/>
</dbReference>
<dbReference type="GO" id="GO:1904263">
    <property type="term" value="P:positive regulation of TORC1 signaling"/>
    <property type="evidence" value="ECO:0000250"/>
    <property type="project" value="UniProtKB"/>
</dbReference>
<dbReference type="GO" id="GO:0048168">
    <property type="term" value="P:regulation of neuronal synaptic plasticity"/>
    <property type="evidence" value="ECO:0000303"/>
    <property type="project" value="RGD"/>
</dbReference>
<dbReference type="GO" id="GO:0099175">
    <property type="term" value="P:regulation of postsynapse organization"/>
    <property type="evidence" value="ECO:0000314"/>
    <property type="project" value="SynGO"/>
</dbReference>
<dbReference type="GO" id="GO:0032006">
    <property type="term" value="P:regulation of TOR signaling"/>
    <property type="evidence" value="ECO:0000266"/>
    <property type="project" value="RGD"/>
</dbReference>
<dbReference type="GO" id="GO:2000074">
    <property type="term" value="P:regulation of type B pancreatic cell development"/>
    <property type="evidence" value="ECO:0000266"/>
    <property type="project" value="RGD"/>
</dbReference>
<dbReference type="GO" id="GO:0007264">
    <property type="term" value="P:small GTPase-mediated signal transduction"/>
    <property type="evidence" value="ECO:0000314"/>
    <property type="project" value="RGD"/>
</dbReference>
<dbReference type="CDD" id="cd04137">
    <property type="entry name" value="RheB"/>
    <property type="match status" value="1"/>
</dbReference>
<dbReference type="FunFam" id="3.40.50.300:FF:000273">
    <property type="entry name" value="GTP-binding protein Rheb homolog"/>
    <property type="match status" value="1"/>
</dbReference>
<dbReference type="Gene3D" id="3.40.50.300">
    <property type="entry name" value="P-loop containing nucleotide triphosphate hydrolases"/>
    <property type="match status" value="1"/>
</dbReference>
<dbReference type="InterPro" id="IPR027417">
    <property type="entry name" value="P-loop_NTPase"/>
</dbReference>
<dbReference type="InterPro" id="IPR005225">
    <property type="entry name" value="Small_GTP-bd"/>
</dbReference>
<dbReference type="InterPro" id="IPR001806">
    <property type="entry name" value="Small_GTPase"/>
</dbReference>
<dbReference type="InterPro" id="IPR020849">
    <property type="entry name" value="Small_GTPase_Ras-type"/>
</dbReference>
<dbReference type="NCBIfam" id="TIGR00231">
    <property type="entry name" value="small_GTP"/>
    <property type="match status" value="1"/>
</dbReference>
<dbReference type="PANTHER" id="PTHR24070">
    <property type="entry name" value="RAS, DI-RAS, AND RHEB FAMILY MEMBERS OF SMALL GTPASE SUPERFAMILY"/>
    <property type="match status" value="1"/>
</dbReference>
<dbReference type="Pfam" id="PF00071">
    <property type="entry name" value="Ras"/>
    <property type="match status" value="1"/>
</dbReference>
<dbReference type="PRINTS" id="PR00449">
    <property type="entry name" value="RASTRNSFRMNG"/>
</dbReference>
<dbReference type="SMART" id="SM00175">
    <property type="entry name" value="RAB"/>
    <property type="match status" value="1"/>
</dbReference>
<dbReference type="SMART" id="SM00173">
    <property type="entry name" value="RAS"/>
    <property type="match status" value="1"/>
</dbReference>
<dbReference type="SMART" id="SM00174">
    <property type="entry name" value="RHO"/>
    <property type="match status" value="1"/>
</dbReference>
<dbReference type="SUPFAM" id="SSF52540">
    <property type="entry name" value="P-loop containing nucleoside triphosphate hydrolases"/>
    <property type="match status" value="1"/>
</dbReference>
<dbReference type="PROSITE" id="PS51421">
    <property type="entry name" value="RAS"/>
    <property type="match status" value="1"/>
</dbReference>
<gene>
    <name evidence="5 7" type="primary">Rheb</name>
</gene>
<organism>
    <name type="scientific">Rattus norvegicus</name>
    <name type="common">Rat</name>
    <dbReference type="NCBI Taxonomy" id="10116"/>
    <lineage>
        <taxon>Eukaryota</taxon>
        <taxon>Metazoa</taxon>
        <taxon>Chordata</taxon>
        <taxon>Craniata</taxon>
        <taxon>Vertebrata</taxon>
        <taxon>Euteleostomi</taxon>
        <taxon>Mammalia</taxon>
        <taxon>Eutheria</taxon>
        <taxon>Euarchontoglires</taxon>
        <taxon>Glires</taxon>
        <taxon>Rodentia</taxon>
        <taxon>Myomorpha</taxon>
        <taxon>Muroidea</taxon>
        <taxon>Muridae</taxon>
        <taxon>Murinae</taxon>
        <taxon>Rattus</taxon>
    </lineage>
</organism>
<protein>
    <recommendedName>
        <fullName evidence="6">GTP-binding protein Rheb</fullName>
        <ecNumber evidence="1">3.6.5.-</ecNumber>
    </recommendedName>
    <alternativeName>
        <fullName>Ras homolog enriched in brain</fullName>
    </alternativeName>
</protein>
<comment type="function">
    <text evidence="1">Small GTPase that acts as an allosteric activator of the canonical mTORC1 complex, an evolutionarily conserved central nutrient sensor that stimulates anabolic reactions and macromolecule biosynthesis to promote cellular biomass generation and growth. In response to nutrients, growth factors or amino acids, specifically activates the protein kinase activity of MTOR, the catalytic component of the mTORC1 complex: acts by causing a conformational change that allows the alignment of residues in the active site of MTOR, thereby enhancing the phosphorylation of ribosomal protein S6 kinase (RPS6KB1 and RPS6KB2) and EIF4EBP1 (4E-BP1). RHEB is also required for localization of the TSC-TBC complex to lysosomal membranes. In response to starvation, RHEB is inactivated by the TSC-TBC complex, preventing activation of mTORC1. Has low intrinsic GTPase activity.</text>
</comment>
<comment type="catalytic activity">
    <reaction evidence="1">
        <text>GTP + H2O = GDP + phosphate + H(+)</text>
        <dbReference type="Rhea" id="RHEA:19669"/>
        <dbReference type="ChEBI" id="CHEBI:15377"/>
        <dbReference type="ChEBI" id="CHEBI:15378"/>
        <dbReference type="ChEBI" id="CHEBI:37565"/>
        <dbReference type="ChEBI" id="CHEBI:43474"/>
        <dbReference type="ChEBI" id="CHEBI:58189"/>
    </reaction>
    <physiologicalReaction direction="left-to-right" evidence="1">
        <dbReference type="Rhea" id="RHEA:19670"/>
    </physiologicalReaction>
</comment>
<comment type="activity regulation">
    <text evidence="1">Alternates between an inactive form bound to GDP and an active form bound to GTP. Inactivated by the TSC-TBC complex via the GTPase activating protein (GAP) domain of TSC2. Autoinhibited by Tyr-35, which constrains the active site conformation, restricting the access of the catalytic Asp-65 to the nucleotide-binding pocket (By similarity).</text>
</comment>
<comment type="subunit">
    <text evidence="1">Associates with the mTORC1 complex (MTOR, MLST8 and RPTOR) in a guanyl nucleotide-independent manner. Interacts with TSC2. Interacts with MCRS1; the interaction maintains RHEB at the lysosome in its active GTP-bound form and prevents its interaction with the mTORC1 complex inhibitor TSC2, ensuring activation of the mTORC1 complex by RHEB (By similarity). Interacts (when prenylated) with PDE6D; this promotes release from membranes (By similarity).</text>
</comment>
<comment type="subcellular location">
    <subcellularLocation>
        <location evidence="1">Endomembrane system</location>
        <topology evidence="1">Lipid-anchor</topology>
        <orientation evidence="1">Cytoplasmic side</orientation>
    </subcellularLocation>
    <subcellularLocation>
        <location evidence="1">Lysosome membrane</location>
        <topology evidence="1">Lipid-anchor</topology>
        <orientation evidence="1">Cytoplasmic side</orientation>
    </subcellularLocation>
    <subcellularLocation>
        <location evidence="1">Golgi apparatus membrane</location>
        <topology evidence="1">Lipid-anchor</topology>
        <orientation evidence="1">Cytoplasmic side</orientation>
    </subcellularLocation>
    <subcellularLocation>
        <location evidence="1">Endoplasmic reticulum membrane</location>
        <topology evidence="1">Lipid-anchor</topology>
        <orientation evidence="1">Cytoplasmic side</orientation>
    </subcellularLocation>
    <subcellularLocation>
        <location evidence="1">Cytoplasm</location>
        <location evidence="1">Cytosol</location>
    </subcellularLocation>
    <text evidence="1">Farnesylation is required for recruitment to lysosomal membranes, where it activates the mTORC1 complex.</text>
</comment>
<comment type="tissue specificity">
    <text evidence="4">Expressed at high levels in normal adult cortex as well as a number of peripheral tissues, including lung and intestine.</text>
</comment>
<comment type="PTM">
    <text evidence="3">Farnesylation is important for efficiently activating mTORC1-mediated signaling.</text>
</comment>
<comment type="PTM">
    <text evidence="1">Polyubiquitinated in response to amino acid, promoting its interaction with MTOR and mTORC1 activation. Deubiquitination by ATXN3 promotes recruitment of the TSC-TBC complex and RHEB inactivation by TSC2. Monoubiquitinated at Lys-8 by RNF152, promoting its association with the TSC-TBC complex. Deubiquitinated at Lys-8 by USP4, promoting mTORC1 activation.</text>
</comment>
<comment type="PTM">
    <text evidence="2">Phosphorylation by MAPKAPK5 impairs GTP-binding and inactivation.</text>
</comment>
<comment type="miscellaneous">
    <text evidence="1">The conserved catalytic Gln-64 found in other Ras-like GTPases seems not to be involved in GTP hydrolysis in RHEB.</text>
</comment>
<comment type="similarity">
    <text evidence="6">Belongs to the small GTPase superfamily. Rheb family.</text>
</comment>
<accession>Q62639</accession>
<reference key="1">
    <citation type="journal article" date="1994" name="J. Biol. Chem.">
        <title>Rheb, a growth factor- and synaptic activity-regulated gene, encodes a novel Ras-related protein.</title>
        <authorList>
            <person name="Yamagata K."/>
            <person name="Sanders L.K."/>
            <person name="Kaufmann W.E."/>
            <person name="Yee W."/>
            <person name="Barnes C.A."/>
            <person name="Nathans D."/>
            <person name="Worley P.F."/>
        </authorList>
    </citation>
    <scope>NUCLEOTIDE SEQUENCE [MRNA]</scope>
    <scope>TISSUE SPECIFICITY</scope>
    <source>
        <strain>Sprague-Dawley</strain>
        <tissue>Hippocampus</tissue>
    </source>
</reference>
<reference key="2">
    <citation type="journal article" date="2004" name="Genome Res.">
        <title>The status, quality, and expansion of the NIH full-length cDNA project: the Mammalian Gene Collection (MGC).</title>
        <authorList>
            <consortium name="The MGC Project Team"/>
        </authorList>
    </citation>
    <scope>NUCLEOTIDE SEQUENCE [LARGE SCALE MRNA]</scope>
    <source>
        <tissue>Ovary</tissue>
    </source>
</reference>
<reference key="3">
    <citation type="journal article" date="2010" name="J. Biol. Chem.">
        <title>Ras homolog enriched in brain (Rheb) enhances apoptotic signaling.</title>
        <authorList>
            <person name="Karassek S."/>
            <person name="Berghaus C."/>
            <person name="Schwarten M."/>
            <person name="Goemans C.G."/>
            <person name="Ohse N."/>
            <person name="Kock G."/>
            <person name="Jockers K."/>
            <person name="Neumann S."/>
            <person name="Gottfried S."/>
            <person name="Herrmann C."/>
            <person name="Heumann R."/>
            <person name="Stoll R."/>
        </authorList>
    </citation>
    <scope>STRUCTURE BY NMR OF 6-174 IN COMPLEX WITH MAGNESIUM AND GDP</scope>
    <scope>ISOPRENYLATION</scope>
</reference>
<name>RHEB_RAT</name>
<sequence length="184" mass="20479">MPQSKSRKIAILGYRSVGKSSLTIQFVEGQFVDSYDPTIENTFTKLITVNGQEYHLQLVDTAGQDEYSIFPQTYSIDINGYILVYSVTSIKSFEVIKVIHGKLLDMVGKVQIPIMLVGNKKDLHMERVISYEEGKALAESWNAAFLESSAKENQTAVDVFRRIILEAEKIDGAASQGKSSCSVM</sequence>
<feature type="chain" id="PRO_0000082710" description="GTP-binding protein Rheb">
    <location>
        <begin position="1"/>
        <end position="181"/>
    </location>
</feature>
<feature type="propeptide" id="PRO_0000281367" description="Removed in mature form" evidence="1">
    <location>
        <begin position="182"/>
        <end position="184"/>
    </location>
</feature>
<feature type="short sequence motif" description="Effector region">
    <location>
        <begin position="35"/>
        <end position="43"/>
    </location>
</feature>
<feature type="binding site" evidence="3 8">
    <location>
        <position position="16"/>
    </location>
    <ligand>
        <name>GDP</name>
        <dbReference type="ChEBI" id="CHEBI:58189"/>
    </ligand>
</feature>
<feature type="binding site" evidence="1">
    <location>
        <position position="16"/>
    </location>
    <ligand>
        <name>GTP</name>
        <dbReference type="ChEBI" id="CHEBI:37565"/>
    </ligand>
</feature>
<feature type="binding site" evidence="3 8">
    <location>
        <position position="17"/>
    </location>
    <ligand>
        <name>GDP</name>
        <dbReference type="ChEBI" id="CHEBI:58189"/>
    </ligand>
</feature>
<feature type="binding site" evidence="1">
    <location>
        <position position="18"/>
    </location>
    <ligand>
        <name>GTP</name>
        <dbReference type="ChEBI" id="CHEBI:37565"/>
    </ligand>
</feature>
<feature type="binding site" evidence="3 8">
    <location>
        <position position="19"/>
    </location>
    <ligand>
        <name>GDP</name>
        <dbReference type="ChEBI" id="CHEBI:58189"/>
    </ligand>
</feature>
<feature type="binding site" evidence="1">
    <location>
        <position position="19"/>
    </location>
    <ligand>
        <name>GTP</name>
        <dbReference type="ChEBI" id="CHEBI:37565"/>
    </ligand>
</feature>
<feature type="binding site" evidence="3 8">
    <location>
        <position position="20"/>
    </location>
    <ligand>
        <name>GDP</name>
        <dbReference type="ChEBI" id="CHEBI:58189"/>
    </ligand>
</feature>
<feature type="binding site" evidence="1">
    <location>
        <position position="20"/>
    </location>
    <ligand>
        <name>GTP</name>
        <dbReference type="ChEBI" id="CHEBI:37565"/>
    </ligand>
</feature>
<feature type="binding site" evidence="3 8">
    <location>
        <position position="20"/>
    </location>
    <ligand>
        <name>Mg(2+)</name>
        <dbReference type="ChEBI" id="CHEBI:18420"/>
    </ligand>
</feature>
<feature type="binding site" evidence="3 8">
    <location>
        <position position="21"/>
    </location>
    <ligand>
        <name>GDP</name>
        <dbReference type="ChEBI" id="CHEBI:58189"/>
    </ligand>
</feature>
<feature type="binding site" evidence="1">
    <location>
        <position position="21"/>
    </location>
    <ligand>
        <name>GTP</name>
        <dbReference type="ChEBI" id="CHEBI:37565"/>
    </ligand>
</feature>
<feature type="binding site" evidence="1">
    <location>
        <position position="32"/>
    </location>
    <ligand>
        <name>GTP</name>
        <dbReference type="ChEBI" id="CHEBI:37565"/>
    </ligand>
</feature>
<feature type="binding site" evidence="1">
    <location>
        <position position="35"/>
    </location>
    <ligand>
        <name>GTP</name>
        <dbReference type="ChEBI" id="CHEBI:37565"/>
    </ligand>
</feature>
<feature type="binding site" evidence="3 8">
    <location>
        <position position="38"/>
    </location>
    <ligand>
        <name>GDP</name>
        <dbReference type="ChEBI" id="CHEBI:58189"/>
    </ligand>
</feature>
<feature type="binding site" evidence="1">
    <location>
        <position position="38"/>
    </location>
    <ligand>
        <name>GTP</name>
        <dbReference type="ChEBI" id="CHEBI:37565"/>
    </ligand>
</feature>
<feature type="binding site" evidence="3 8">
    <location>
        <position position="38"/>
    </location>
    <ligand>
        <name>Mg(2+)</name>
        <dbReference type="ChEBI" id="CHEBI:18420"/>
    </ligand>
</feature>
<feature type="binding site" evidence="1">
    <location>
        <position position="119"/>
    </location>
    <ligand>
        <name>GTP</name>
        <dbReference type="ChEBI" id="CHEBI:37565"/>
    </ligand>
</feature>
<feature type="binding site" evidence="3 8">
    <location>
        <position position="122"/>
    </location>
    <ligand>
        <name>GDP</name>
        <dbReference type="ChEBI" id="CHEBI:58189"/>
    </ligand>
</feature>
<feature type="binding site" evidence="1">
    <location>
        <position position="122"/>
    </location>
    <ligand>
        <name>GTP</name>
        <dbReference type="ChEBI" id="CHEBI:37565"/>
    </ligand>
</feature>
<feature type="binding site" evidence="3 8">
    <location>
        <position position="150"/>
    </location>
    <ligand>
        <name>GDP</name>
        <dbReference type="ChEBI" id="CHEBI:58189"/>
    </ligand>
</feature>
<feature type="binding site" evidence="1">
    <location>
        <position position="150"/>
    </location>
    <ligand>
        <name>GTP</name>
        <dbReference type="ChEBI" id="CHEBI:37565"/>
    </ligand>
</feature>
<feature type="site" description="Important for autoinhibition of GTPase activity" evidence="1">
    <location>
        <position position="35"/>
    </location>
</feature>
<feature type="modified residue" description="Phosphoserine; by MAPKAPK5" evidence="2">
    <location>
        <position position="130"/>
    </location>
</feature>
<feature type="modified residue" description="Cysteine methyl ester" evidence="1">
    <location>
        <position position="181"/>
    </location>
</feature>
<feature type="lipid moiety-binding region" description="S-farnesyl cysteine" evidence="1">
    <location>
        <position position="181"/>
    </location>
</feature>
<feature type="cross-link" description="Glycyl lysine isopeptide (Lys-Gly) (interchain with G-Cter in ubiquitin)" evidence="1">
    <location>
        <position position="8"/>
    </location>
</feature>
<feature type="strand" evidence="9">
    <location>
        <begin position="7"/>
        <end position="13"/>
    </location>
</feature>
<feature type="helix" evidence="9">
    <location>
        <begin position="19"/>
        <end position="27"/>
    </location>
</feature>
<feature type="strand" evidence="9">
    <location>
        <begin position="41"/>
        <end position="49"/>
    </location>
</feature>
<feature type="strand" evidence="9">
    <location>
        <begin position="52"/>
        <end position="60"/>
    </location>
</feature>
<feature type="strand" evidence="9">
    <location>
        <begin position="63"/>
        <end position="67"/>
    </location>
</feature>
<feature type="strand" evidence="9">
    <location>
        <begin position="69"/>
        <end position="73"/>
    </location>
</feature>
<feature type="strand" evidence="9">
    <location>
        <begin position="79"/>
        <end position="88"/>
    </location>
</feature>
<feature type="helix" evidence="9">
    <location>
        <begin position="90"/>
        <end position="107"/>
    </location>
</feature>
<feature type="strand" evidence="9">
    <location>
        <begin position="114"/>
        <end position="119"/>
    </location>
</feature>
<feature type="helix" evidence="9">
    <location>
        <begin position="121"/>
        <end position="123"/>
    </location>
</feature>
<feature type="turn" evidence="9">
    <location>
        <begin position="124"/>
        <end position="126"/>
    </location>
</feature>
<feature type="helix" evidence="9">
    <location>
        <begin position="131"/>
        <end position="141"/>
    </location>
</feature>
<feature type="strand" evidence="9">
    <location>
        <begin position="144"/>
        <end position="147"/>
    </location>
</feature>
<feature type="helix" evidence="9">
    <location>
        <begin position="153"/>
        <end position="173"/>
    </location>
</feature>
<evidence type="ECO:0000250" key="1">
    <source>
        <dbReference type="UniProtKB" id="Q15382"/>
    </source>
</evidence>
<evidence type="ECO:0000250" key="2">
    <source>
        <dbReference type="UniProtKB" id="Q921J2"/>
    </source>
</evidence>
<evidence type="ECO:0000269" key="3">
    <source>
    </source>
</evidence>
<evidence type="ECO:0000269" key="4">
    <source>
    </source>
</evidence>
<evidence type="ECO:0000303" key="5">
    <source>
    </source>
</evidence>
<evidence type="ECO:0000305" key="6"/>
<evidence type="ECO:0000312" key="7">
    <source>
        <dbReference type="RGD" id="621840"/>
    </source>
</evidence>
<evidence type="ECO:0007744" key="8">
    <source>
        <dbReference type="PDB" id="2L0X"/>
    </source>
</evidence>
<evidence type="ECO:0007829" key="9">
    <source>
        <dbReference type="PDB" id="2L0X"/>
    </source>
</evidence>
<proteinExistence type="evidence at protein level"/>
<keyword id="KW-0002">3D-structure</keyword>
<keyword id="KW-0963">Cytoplasm</keyword>
<keyword id="KW-0256">Endoplasmic reticulum</keyword>
<keyword id="KW-0333">Golgi apparatus</keyword>
<keyword id="KW-0342">GTP-binding</keyword>
<keyword id="KW-0378">Hydrolase</keyword>
<keyword id="KW-1017">Isopeptide bond</keyword>
<keyword id="KW-0449">Lipoprotein</keyword>
<keyword id="KW-0458">Lysosome</keyword>
<keyword id="KW-0460">Magnesium</keyword>
<keyword id="KW-0472">Membrane</keyword>
<keyword id="KW-0479">Metal-binding</keyword>
<keyword id="KW-0488">Methylation</keyword>
<keyword id="KW-0547">Nucleotide-binding</keyword>
<keyword id="KW-0597">Phosphoprotein</keyword>
<keyword id="KW-0636">Prenylation</keyword>
<keyword id="KW-1185">Reference proteome</keyword>
<keyword id="KW-0832">Ubl conjugation</keyword>